<keyword id="KW-0012">Acyltransferase</keyword>
<keyword id="KW-0028">Amino-acid biosynthesis</keyword>
<keyword id="KW-0963">Cytoplasm</keyword>
<keyword id="KW-0220">Diaminopimelate biosynthesis</keyword>
<keyword id="KW-0457">Lysine biosynthesis</keyword>
<keyword id="KW-0677">Repeat</keyword>
<keyword id="KW-0808">Transferase</keyword>
<sequence length="273" mass="29629">MSLEQIIEQAFEKRAEYSPATMPQEVKDAVNSVLDQLDNGSLRVAEKKDGEWIVNQWAKKAVLLSFRLNDNYPMQTGEHVQFYDKVPTKFANWTEQQFVEAGVRVVPPAVARRGSFIAKGVVLMPSYTNIGAYVDEGAMIDTWATVGSCAQIGKNVHLSGGVGIGGVLEPLQANPTIIEDNCFIGARSEIVEGVIVEEGSVISMGVYIGQSTKIYDRETGEITYGRVPAGSVVVSGSLPSKDGSHSLYCAVIVKKVDAQTRSKTSINELLRLA</sequence>
<name>DAPD_PSYWF</name>
<reference key="1">
    <citation type="submission" date="2007-05" db="EMBL/GenBank/DDBJ databases">
        <title>Complete sequence of chromosome of Psychrobacter sp. PRwf-1.</title>
        <authorList>
            <consortium name="US DOE Joint Genome Institute"/>
            <person name="Copeland A."/>
            <person name="Lucas S."/>
            <person name="Lapidus A."/>
            <person name="Barry K."/>
            <person name="Detter J.C."/>
            <person name="Glavina del Rio T."/>
            <person name="Hammon N."/>
            <person name="Israni S."/>
            <person name="Dalin E."/>
            <person name="Tice H."/>
            <person name="Pitluck S."/>
            <person name="Chain P."/>
            <person name="Malfatti S."/>
            <person name="Shin M."/>
            <person name="Vergez L."/>
            <person name="Schmutz J."/>
            <person name="Larimer F."/>
            <person name="Land M."/>
            <person name="Hauser L."/>
            <person name="Kyrpides N."/>
            <person name="Kim E."/>
            <person name="Tiedje J."/>
            <person name="Richardson P."/>
        </authorList>
    </citation>
    <scope>NUCLEOTIDE SEQUENCE [LARGE SCALE GENOMIC DNA]</scope>
    <source>
        <strain>PRwf-1</strain>
    </source>
</reference>
<evidence type="ECO:0000255" key="1">
    <source>
        <dbReference type="HAMAP-Rule" id="MF_00811"/>
    </source>
</evidence>
<gene>
    <name evidence="1" type="primary">dapD</name>
    <name type="ordered locus">PsycPRwf_0897</name>
</gene>
<accession>A5WDV6</accession>
<comment type="catalytic activity">
    <reaction evidence="1">
        <text>(S)-2,3,4,5-tetrahydrodipicolinate + succinyl-CoA + H2O = (S)-2-succinylamino-6-oxoheptanedioate + CoA</text>
        <dbReference type="Rhea" id="RHEA:17325"/>
        <dbReference type="ChEBI" id="CHEBI:15377"/>
        <dbReference type="ChEBI" id="CHEBI:15685"/>
        <dbReference type="ChEBI" id="CHEBI:16845"/>
        <dbReference type="ChEBI" id="CHEBI:57287"/>
        <dbReference type="ChEBI" id="CHEBI:57292"/>
        <dbReference type="EC" id="2.3.1.117"/>
    </reaction>
</comment>
<comment type="pathway">
    <text evidence="1">Amino-acid biosynthesis; L-lysine biosynthesis via DAP pathway; LL-2,6-diaminopimelate from (S)-tetrahydrodipicolinate (succinylase route): step 1/3.</text>
</comment>
<comment type="subunit">
    <text evidence="1">Homotrimer.</text>
</comment>
<comment type="subcellular location">
    <subcellularLocation>
        <location evidence="1">Cytoplasm</location>
    </subcellularLocation>
</comment>
<comment type="similarity">
    <text evidence="1">Belongs to the transferase hexapeptide repeat family.</text>
</comment>
<feature type="chain" id="PRO_1000072854" description="2,3,4,5-tetrahydropyridine-2,6-dicarboxylate N-succinyltransferase">
    <location>
        <begin position="1"/>
        <end position="273"/>
    </location>
</feature>
<feature type="binding site" evidence="1">
    <location>
        <position position="104"/>
    </location>
    <ligand>
        <name>substrate</name>
    </ligand>
</feature>
<feature type="binding site" evidence="1">
    <location>
        <position position="141"/>
    </location>
    <ligand>
        <name>substrate</name>
    </ligand>
</feature>
<dbReference type="EC" id="2.3.1.117" evidence="1"/>
<dbReference type="EMBL" id="CP000713">
    <property type="protein sequence ID" value="ABQ93847.1"/>
    <property type="molecule type" value="Genomic_DNA"/>
</dbReference>
<dbReference type="SMR" id="A5WDV6"/>
<dbReference type="STRING" id="349106.PsycPRwf_0897"/>
<dbReference type="KEGG" id="prw:PsycPRwf_0897"/>
<dbReference type="eggNOG" id="COG2171">
    <property type="taxonomic scope" value="Bacteria"/>
</dbReference>
<dbReference type="HOGENOM" id="CLU_050859_0_1_6"/>
<dbReference type="UniPathway" id="UPA00034">
    <property type="reaction ID" value="UER00019"/>
</dbReference>
<dbReference type="GO" id="GO:0005737">
    <property type="term" value="C:cytoplasm"/>
    <property type="evidence" value="ECO:0007669"/>
    <property type="project" value="UniProtKB-SubCell"/>
</dbReference>
<dbReference type="GO" id="GO:0008666">
    <property type="term" value="F:2,3,4,5-tetrahydropyridine-2,6-dicarboxylate N-succinyltransferase activity"/>
    <property type="evidence" value="ECO:0007669"/>
    <property type="project" value="UniProtKB-UniRule"/>
</dbReference>
<dbReference type="GO" id="GO:0016779">
    <property type="term" value="F:nucleotidyltransferase activity"/>
    <property type="evidence" value="ECO:0007669"/>
    <property type="project" value="TreeGrafter"/>
</dbReference>
<dbReference type="GO" id="GO:0019877">
    <property type="term" value="P:diaminopimelate biosynthetic process"/>
    <property type="evidence" value="ECO:0007669"/>
    <property type="project" value="UniProtKB-UniRule"/>
</dbReference>
<dbReference type="GO" id="GO:0009089">
    <property type="term" value="P:lysine biosynthetic process via diaminopimelate"/>
    <property type="evidence" value="ECO:0007669"/>
    <property type="project" value="UniProtKB-UniRule"/>
</dbReference>
<dbReference type="CDD" id="cd03350">
    <property type="entry name" value="LbH_THP_succinylT"/>
    <property type="match status" value="1"/>
</dbReference>
<dbReference type="Gene3D" id="2.160.10.10">
    <property type="entry name" value="Hexapeptide repeat proteins"/>
    <property type="match status" value="1"/>
</dbReference>
<dbReference type="Gene3D" id="1.10.166.10">
    <property type="entry name" value="Tetrahydrodipicolinate-N-succinyltransferase, N-terminal domain"/>
    <property type="match status" value="1"/>
</dbReference>
<dbReference type="HAMAP" id="MF_00811">
    <property type="entry name" value="DapD"/>
    <property type="match status" value="1"/>
</dbReference>
<dbReference type="InterPro" id="IPR005664">
    <property type="entry name" value="DapD_Trfase_Hexpep_rpt_fam"/>
</dbReference>
<dbReference type="InterPro" id="IPR001451">
    <property type="entry name" value="Hexapep"/>
</dbReference>
<dbReference type="InterPro" id="IPR018357">
    <property type="entry name" value="Hexapep_transf_CS"/>
</dbReference>
<dbReference type="InterPro" id="IPR023180">
    <property type="entry name" value="THP_succinylTrfase_dom1"/>
</dbReference>
<dbReference type="InterPro" id="IPR037133">
    <property type="entry name" value="THP_succinylTrfase_N_sf"/>
</dbReference>
<dbReference type="InterPro" id="IPR011004">
    <property type="entry name" value="Trimer_LpxA-like_sf"/>
</dbReference>
<dbReference type="NCBIfam" id="TIGR00965">
    <property type="entry name" value="dapD"/>
    <property type="match status" value="1"/>
</dbReference>
<dbReference type="NCBIfam" id="NF008808">
    <property type="entry name" value="PRK11830.1"/>
    <property type="match status" value="1"/>
</dbReference>
<dbReference type="PANTHER" id="PTHR19136:SF52">
    <property type="entry name" value="2,3,4,5-TETRAHYDROPYRIDINE-2,6-DICARBOXYLATE N-SUCCINYLTRANSFERASE"/>
    <property type="match status" value="1"/>
</dbReference>
<dbReference type="PANTHER" id="PTHR19136">
    <property type="entry name" value="MOLYBDENUM COFACTOR GUANYLYLTRANSFERASE"/>
    <property type="match status" value="1"/>
</dbReference>
<dbReference type="Pfam" id="PF14602">
    <property type="entry name" value="Hexapep_2"/>
    <property type="match status" value="1"/>
</dbReference>
<dbReference type="Pfam" id="PF14805">
    <property type="entry name" value="THDPS_N_2"/>
    <property type="match status" value="1"/>
</dbReference>
<dbReference type="SUPFAM" id="SSF51161">
    <property type="entry name" value="Trimeric LpxA-like enzymes"/>
    <property type="match status" value="1"/>
</dbReference>
<dbReference type="PROSITE" id="PS00101">
    <property type="entry name" value="HEXAPEP_TRANSFERASES"/>
    <property type="match status" value="1"/>
</dbReference>
<proteinExistence type="inferred from homology"/>
<protein>
    <recommendedName>
        <fullName evidence="1">2,3,4,5-tetrahydropyridine-2,6-dicarboxylate N-succinyltransferase</fullName>
        <ecNumber evidence="1">2.3.1.117</ecNumber>
    </recommendedName>
    <alternativeName>
        <fullName evidence="1">Tetrahydrodipicolinate N-succinyltransferase</fullName>
        <shortName evidence="1">THDP succinyltransferase</shortName>
        <shortName evidence="1">THP succinyltransferase</shortName>
        <shortName evidence="1">Tetrahydropicolinate succinylase</shortName>
    </alternativeName>
</protein>
<organism>
    <name type="scientific">Psychrobacter sp. (strain PRwf-1)</name>
    <dbReference type="NCBI Taxonomy" id="349106"/>
    <lineage>
        <taxon>Bacteria</taxon>
        <taxon>Pseudomonadati</taxon>
        <taxon>Pseudomonadota</taxon>
        <taxon>Gammaproteobacteria</taxon>
        <taxon>Moraxellales</taxon>
        <taxon>Moraxellaceae</taxon>
        <taxon>Psychrobacter</taxon>
    </lineage>
</organism>